<protein>
    <recommendedName>
        <fullName evidence="7">Conglutin beta 2</fullName>
    </recommendedName>
    <allergenName evidence="6">Lup an 1</allergenName>
</protein>
<feature type="signal peptide" evidence="1">
    <location>
        <begin position="1"/>
        <end position="30"/>
    </location>
</feature>
<feature type="chain" id="PRO_5003325732" description="Conglutin beta 2" evidence="1">
    <location>
        <begin position="31"/>
        <end position="603"/>
    </location>
</feature>
<feature type="domain" description="Cupin type-1 1" evidence="1">
    <location>
        <begin position="177"/>
        <end position="335"/>
    </location>
</feature>
<feature type="domain" description="Cupin type-1 2" evidence="1">
    <location>
        <begin position="394"/>
        <end position="554"/>
    </location>
</feature>
<feature type="region of interest" description="Disordered" evidence="3">
    <location>
        <begin position="36"/>
        <end position="177"/>
    </location>
</feature>
<feature type="region of interest" description="Disordered" evidence="3">
    <location>
        <begin position="343"/>
        <end position="363"/>
    </location>
</feature>
<feature type="region of interest" description="Disordered" evidence="3">
    <location>
        <begin position="375"/>
        <end position="399"/>
    </location>
</feature>
<feature type="region of interest" description="Disordered" evidence="3">
    <location>
        <begin position="564"/>
        <end position="583"/>
    </location>
</feature>
<feature type="compositionally biased region" description="Basic and acidic residues" evidence="3">
    <location>
        <begin position="36"/>
        <end position="105"/>
    </location>
</feature>
<feature type="compositionally biased region" description="Low complexity" evidence="3">
    <location>
        <begin position="137"/>
        <end position="147"/>
    </location>
</feature>
<feature type="compositionally biased region" description="Basic and acidic residues" evidence="3">
    <location>
        <begin position="148"/>
        <end position="172"/>
    </location>
</feature>
<feature type="compositionally biased region" description="Low complexity" evidence="3">
    <location>
        <begin position="381"/>
        <end position="393"/>
    </location>
</feature>
<feature type="compositionally biased region" description="Low complexity" evidence="3">
    <location>
        <begin position="564"/>
        <end position="574"/>
    </location>
</feature>
<feature type="glycosylation site" description="N-linked (GlcNAc...) asparagine" evidence="2">
    <location>
        <position position="504"/>
    </location>
</feature>
<accession>F5B8W0</accession>
<keyword id="KW-0020">Allergen</keyword>
<keyword id="KW-0325">Glycoprotein</keyword>
<keyword id="KW-0708">Seed storage protein</keyword>
<keyword id="KW-0732">Signal</keyword>
<keyword id="KW-0758">Storage protein</keyword>
<proteinExistence type="evidence at protein level"/>
<organism>
    <name type="scientific">Lupinus angustifolius</name>
    <name type="common">Narrow-leaved blue lupine</name>
    <dbReference type="NCBI Taxonomy" id="3871"/>
    <lineage>
        <taxon>Eukaryota</taxon>
        <taxon>Viridiplantae</taxon>
        <taxon>Streptophyta</taxon>
        <taxon>Embryophyta</taxon>
        <taxon>Tracheophyta</taxon>
        <taxon>Spermatophyta</taxon>
        <taxon>Magnoliopsida</taxon>
        <taxon>eudicotyledons</taxon>
        <taxon>Gunneridae</taxon>
        <taxon>Pentapetalae</taxon>
        <taxon>rosids</taxon>
        <taxon>fabids</taxon>
        <taxon>Fabales</taxon>
        <taxon>Fabaceae</taxon>
        <taxon>Papilionoideae</taxon>
        <taxon>50 kb inversion clade</taxon>
        <taxon>genistoids sensu lato</taxon>
        <taxon>core genistoids</taxon>
        <taxon>Genisteae</taxon>
        <taxon>Lupinus</taxon>
    </lineage>
</organism>
<gene>
    <name evidence="7" type="primary">BETA2</name>
</gene>
<name>CONB2_LUPAN</name>
<sequence length="603" mass="70701">MANMRVKFPTLVLLLGIVFLMAVSIGIAYGEKNAIKNHERPQEREQEERDPRQQPRPRHQEEQEREHGREEERNREPSRGRSESEESREEEREQRREPSRGREQEQQPQHGRREEEEEWQPRRQRPQSRREEREQEQGSSSSSGRQSGYERREQREEREQQQEQDSRSESRRQRNPYYFSYERFQTLYKNRNGQIRVLERFDQRTNRLENLQNYRIVEFQSKPNTLILPKHSDADYILVVLNGRATITIVNPDKRQAYNLEHGDALRLPAGTTSYILNPDDNQNLRVVKLAIPINNPGNFYDFYPSSTKDQQSYFNGFSRNTLEATFNTRYEEIQRIILGNEDGQEDEEQSRGQEQSHQDQGVIVRVSKEQIQELRKHAQSSSGKGKPSESGPFNLRSDEPIYSNKFGNFYEITPDRNPQAQDLDISLTFIEINEGGLLLPHYNSKAIFVVVVDEGEGNYELVGIRDQERQQDEQEQEEVRRYNAKLSEGDIFVIPAGHPISINASSNLRLLGFGINADENQRNFLAGSEDNVIRQLDKEVKQLTFPGSVEDVERLIKNQQQSYFANAQPQQQQQREKEGRRGRRGLSFPFRSLFTKLLSTIM</sequence>
<evidence type="ECO:0000255" key="1"/>
<evidence type="ECO:0000255" key="2">
    <source>
        <dbReference type="PROSITE-ProRule" id="PRU00498"/>
    </source>
</evidence>
<evidence type="ECO:0000256" key="3">
    <source>
        <dbReference type="SAM" id="MobiDB-lite"/>
    </source>
</evidence>
<evidence type="ECO:0000269" key="4">
    <source>
    </source>
</evidence>
<evidence type="ECO:0000269" key="5">
    <source>
    </source>
</evidence>
<evidence type="ECO:0000303" key="6">
    <source>
    </source>
</evidence>
<evidence type="ECO:0000303" key="7">
    <source>
    </source>
</evidence>
<evidence type="ECO:0000305" key="8"/>
<evidence type="ECO:0000305" key="9">
    <source>
    </source>
</evidence>
<evidence type="ECO:0000305" key="10">
    <source ref="4"/>
</evidence>
<comment type="function">
    <text evidence="5">Seed storage protein. Accumulates during seed development and is hydrolyzed after germination to provide a carbon and nitrogen source for the developing seedling.</text>
</comment>
<comment type="subunit">
    <text evidence="9">Component of globulins complexes which accumulate in seeds.</text>
</comment>
<comment type="developmental stage">
    <text evidence="5">Increased expression during seed filling, with a maximum between 33 and 38 days after anthesis.</text>
</comment>
<comment type="allergen">
    <text evidence="4">Causes an allergic reaction in human. Lup an 1 is the major lupin allergen.</text>
</comment>
<comment type="miscellaneous">
    <text evidence="10">The variability of the residues taking part of IgE-binding epitopes might be responsible of the difference in cross-reactivity among legumes.</text>
</comment>
<comment type="similarity">
    <text evidence="8">Belongs to the 7S seed storage protein family.</text>
</comment>
<dbReference type="EMBL" id="HQ670410">
    <property type="protein sequence ID" value="AEB33713.1"/>
    <property type="molecule type" value="mRNA"/>
</dbReference>
<dbReference type="SMR" id="F5B8W0"/>
<dbReference type="Allergome" id="4015">
    <property type="allergen name" value="Lup an 1"/>
</dbReference>
<dbReference type="GlyCosmos" id="F5B8W0">
    <property type="glycosylation" value="1 site, No reported glycans"/>
</dbReference>
<dbReference type="GO" id="GO:0045735">
    <property type="term" value="F:nutrient reservoir activity"/>
    <property type="evidence" value="ECO:0007669"/>
    <property type="project" value="UniProtKB-KW"/>
</dbReference>
<dbReference type="CDD" id="cd02245">
    <property type="entry name" value="cupin_7S_vicilin-like_C"/>
    <property type="match status" value="1"/>
</dbReference>
<dbReference type="CDD" id="cd02244">
    <property type="entry name" value="cupin_7S_vicilin-like_N"/>
    <property type="match status" value="1"/>
</dbReference>
<dbReference type="Gene3D" id="2.60.120.10">
    <property type="entry name" value="Jelly Rolls"/>
    <property type="match status" value="2"/>
</dbReference>
<dbReference type="InterPro" id="IPR006045">
    <property type="entry name" value="Cupin_1"/>
</dbReference>
<dbReference type="InterPro" id="IPR014710">
    <property type="entry name" value="RmlC-like_jellyroll"/>
</dbReference>
<dbReference type="InterPro" id="IPR011051">
    <property type="entry name" value="RmlC_Cupin_sf"/>
</dbReference>
<dbReference type="InterPro" id="IPR050253">
    <property type="entry name" value="Seed_Storage-Functional"/>
</dbReference>
<dbReference type="PANTHER" id="PTHR31189">
    <property type="entry name" value="OS03G0336100 PROTEIN-RELATED"/>
    <property type="match status" value="1"/>
</dbReference>
<dbReference type="PANTHER" id="PTHR31189:SF41">
    <property type="entry name" value="VICILIN C72"/>
    <property type="match status" value="1"/>
</dbReference>
<dbReference type="Pfam" id="PF00190">
    <property type="entry name" value="Cupin_1"/>
    <property type="match status" value="2"/>
</dbReference>
<dbReference type="SMART" id="SM00835">
    <property type="entry name" value="Cupin_1"/>
    <property type="match status" value="2"/>
</dbReference>
<dbReference type="SUPFAM" id="SSF51182">
    <property type="entry name" value="RmlC-like cupins"/>
    <property type="match status" value="1"/>
</dbReference>
<reference key="1">
    <citation type="journal article" date="2011" name="BMC Plant Biol.">
        <title>Identification and characterisation of seed storage protein transcripts from Lupinus angustifolius.</title>
        <authorList>
            <person name="Foley R.C."/>
            <person name="Gao L.-L."/>
            <person name="Spriggs A."/>
            <person name="Soo L.Y.C."/>
            <person name="Goggin D.E."/>
            <person name="Smith P.M.C."/>
            <person name="Atkins C.A."/>
            <person name="Singh K.B."/>
        </authorList>
    </citation>
    <scope>NUCLEOTIDE SEQUENCE [MRNA]</scope>
    <scope>FUNCTION</scope>
    <scope>DEVELOPMENTAL STAGE</scope>
    <source>
        <strain>cv. Tanjil</strain>
        <tissue>Seed</tissue>
    </source>
</reference>
<reference key="2">
    <citation type="journal article" date="2008" name="J. Agric. Food Chem.">
        <title>Proteomic analysis of lupin seed proteins to identify conglutin Beta as an allergen, Lup an 1.</title>
        <authorList>
            <person name="Goggin D.E."/>
            <person name="Mir G."/>
            <person name="Smith W.B."/>
            <person name="Stuckey M."/>
            <person name="Smith P.M."/>
        </authorList>
    </citation>
    <scope>ALLERGEN</scope>
</reference>
<reference key="3">
    <citation type="journal article" date="2012" name="J. Agric. Food Chem.">
        <title>Release of flavonoids from lupin globulin proteins during digestion in a model system.</title>
        <authorList>
            <person name="Czubinski J."/>
            <person name="Dwiecki K."/>
            <person name="Siger A."/>
            <person name="Kachlicki P."/>
            <person name="Neunert G."/>
            <person name="Lampart-Szczapa E."/>
            <person name="Nogala-Kalucka M."/>
        </authorList>
    </citation>
    <scope>SUBUNIT</scope>
    <source>
        <strain>cv. Zeus</strain>
    </source>
</reference>
<reference key="4">
    <citation type="book" date="2015" name="Bioinformatics and Biomedical Engineering, LNCS 9043">
        <title>Lupin allergy: Uncovering structural features and epitopes of b-conglutin proteins in Lupinus angustifolius L. with a focus on cross-allergenic reactivity to peanut and other legumes.</title>
        <editorList>
            <person name="Ortuno F."/>
            <person name="Rojas I."/>
        </editorList>
        <authorList>
            <person name="Jimenez-Lopez J.C."/>
            <person name="Lima-Cabello E."/>
            <person name="Melser S."/>
            <person name="Foley R.C."/>
            <person name="Singh K.B."/>
        </authorList>
    </citation>
    <scope>3D-STRUCTURE MODELING</scope>
</reference>